<feature type="chain" id="PRO_0000059626" description="Multifunctional non-homologous end joining protein LigD">
    <location>
        <begin position="1"/>
        <end position="759"/>
    </location>
</feature>
<feature type="DNA-binding region" evidence="1">
    <location>
        <begin position="13"/>
        <end position="16"/>
    </location>
</feature>
<feature type="DNA-binding region" evidence="1">
    <location>
        <position position="26"/>
    </location>
</feature>
<feature type="DNA-binding region" evidence="1">
    <location>
        <begin position="53"/>
        <end position="55"/>
    </location>
</feature>
<feature type="DNA-binding region" evidence="1">
    <location>
        <begin position="63"/>
        <end position="67"/>
    </location>
</feature>
<feature type="DNA-binding region" evidence="1">
    <location>
        <position position="71"/>
    </location>
</feature>
<feature type="DNA-binding region" evidence="1">
    <location>
        <begin position="83"/>
        <end position="88"/>
    </location>
</feature>
<feature type="DNA-binding region" evidence="1">
    <location>
        <position position="104"/>
    </location>
</feature>
<feature type="DNA-binding region" evidence="1">
    <location>
        <begin position="234"/>
        <end position="235"/>
    </location>
</feature>
<feature type="region of interest" description="DNA repair polymerase domain (Pol)">
    <location>
        <begin position="9"/>
        <end position="261"/>
    </location>
</feature>
<feature type="region of interest" description="3'-phosphoesterase domain (PE)">
    <location>
        <begin position="297"/>
        <end position="446"/>
    </location>
</feature>
<feature type="region of interest" description="Ligase domain (Lig)">
    <location>
        <begin position="460"/>
        <end position="757"/>
    </location>
</feature>
<feature type="region of interest" description="Disordered" evidence="2">
    <location>
        <begin position="740"/>
        <end position="759"/>
    </location>
</feature>
<feature type="compositionally biased region" description="Basic and acidic residues" evidence="2">
    <location>
        <begin position="747"/>
        <end position="759"/>
    </location>
</feature>
<feature type="active site" description="N6-AMP-lysine intermediate" evidence="1">
    <location>
        <position position="481"/>
    </location>
</feature>
<feature type="binding site" evidence="1">
    <location>
        <position position="52"/>
    </location>
    <ligand>
        <name>substrate</name>
        <note>for polymerase activity</note>
    </ligand>
</feature>
<feature type="binding site" evidence="1">
    <location>
        <position position="111"/>
    </location>
    <ligand>
        <name>substrate</name>
        <note>for polymerase activity</note>
    </ligand>
</feature>
<feature type="binding site" evidence="1">
    <location>
        <begin position="137"/>
        <end position="139"/>
    </location>
    <ligand>
        <name>substrate</name>
        <note>for polymerase activity</note>
    </ligand>
</feature>
<feature type="binding site" evidence="1">
    <location>
        <position position="137"/>
    </location>
    <ligand>
        <name>Mn(2+)</name>
        <dbReference type="ChEBI" id="CHEBI:29035"/>
        <label>1</label>
    </ligand>
</feature>
<feature type="binding site" evidence="1">
    <location>
        <position position="137"/>
    </location>
    <ligand>
        <name>Mn(2+)</name>
        <dbReference type="ChEBI" id="CHEBI:29035"/>
        <label>2</label>
    </ligand>
</feature>
<feature type="binding site" evidence="1">
    <location>
        <position position="139"/>
    </location>
    <ligand>
        <name>Mn(2+)</name>
        <dbReference type="ChEBI" id="CHEBI:29035"/>
        <label>1</label>
    </ligand>
</feature>
<feature type="binding site" evidence="1">
    <location>
        <position position="139"/>
    </location>
    <ligand>
        <name>Mn(2+)</name>
        <dbReference type="ChEBI" id="CHEBI:29035"/>
        <label>2</label>
    </ligand>
</feature>
<feature type="binding site" evidence="1">
    <location>
        <begin position="172"/>
        <end position="178"/>
    </location>
    <ligand>
        <name>substrate</name>
        <note>for polymerase activity</note>
    </ligand>
</feature>
<feature type="binding site" evidence="1">
    <location>
        <position position="227"/>
    </location>
    <ligand>
        <name>Mn(2+)</name>
        <dbReference type="ChEBI" id="CHEBI:29035"/>
        <label>2</label>
    </ligand>
</feature>
<feature type="binding site" evidence="1">
    <location>
        <position position="230"/>
    </location>
    <ligand>
        <name>substrate</name>
        <note>for polymerase activity</note>
    </ligand>
</feature>
<feature type="binding site" evidence="1">
    <location>
        <position position="236"/>
    </location>
    <ligand>
        <name>substrate</name>
        <note>for polymerase activity</note>
    </ligand>
</feature>
<feature type="binding site" evidence="1">
    <location>
        <position position="244"/>
    </location>
    <ligand>
        <name>substrate</name>
        <note>for polymerase activity</note>
    </ligand>
</feature>
<feature type="binding site" evidence="1">
    <location>
        <position position="331"/>
    </location>
    <ligand>
        <name>Mn(2+)</name>
        <dbReference type="ChEBI" id="CHEBI:29035"/>
        <label>3</label>
        <note>catalytic; for 3'-phosphoesterase activity</note>
    </ligand>
</feature>
<feature type="binding site" evidence="1">
    <location>
        <position position="337"/>
    </location>
    <ligand>
        <name>Mn(2+)</name>
        <dbReference type="ChEBI" id="CHEBI:29035"/>
        <label>3</label>
        <note>catalytic; for 3'-phosphoesterase activity</note>
    </ligand>
</feature>
<feature type="binding site" evidence="1">
    <location>
        <position position="339"/>
    </location>
    <ligand>
        <name>Mn(2+)</name>
        <dbReference type="ChEBI" id="CHEBI:29035"/>
        <label>3</label>
        <note>catalytic; for 3'-phosphoesterase activity</note>
    </ligand>
</feature>
<feature type="binding site" evidence="1">
    <location>
        <position position="483"/>
    </location>
    <ligand>
        <name>Mn(2+)</name>
        <dbReference type="ChEBI" id="CHEBI:29035"/>
        <label>4</label>
    </ligand>
</feature>
<feature type="binding site" evidence="1">
    <location>
        <position position="613"/>
    </location>
    <ligand>
        <name>Mn(2+)</name>
        <dbReference type="ChEBI" id="CHEBI:29035"/>
        <label>4</label>
    </ligand>
</feature>
<feature type="site" description="Transition state stabilizer; for 3'-phosphoesterase activity" evidence="1">
    <location>
        <position position="373"/>
    </location>
</feature>
<evidence type="ECO:0000250" key="1"/>
<evidence type="ECO:0000256" key="2">
    <source>
        <dbReference type="SAM" id="MobiDB-lite"/>
    </source>
</evidence>
<evidence type="ECO:0000305" key="3"/>
<comment type="function">
    <text evidence="1">With Ku forms a non-homologous end joining (NHEJ) DNA repair enzyme which repairs DNA double strand breaks (DSB) with reduced fidelity. Ligates dsDNA, repairs incompatible DSB which require 3'-resection, gap filling and ligation. Has several activities; DNA-directed DNA or RNA polymerase on 5'-overhangs, terminal transferase (extending ssDNA or blunt dsDNA in a non-templated fashion, preferentially with rNTPs), DNA-dependent RNA primase (synthesizes short RNAs on unprimed closed ssDNA) and 3'-phosphoesterase on ssDNA.</text>
</comment>
<comment type="function">
    <text evidence="1">The preference of the polymerase domain for rNTPs over dNTPs may be advantageous in dormant cells, where the dNTP pool may be limiting.</text>
</comment>
<comment type="catalytic activity">
    <reaction>
        <text>ATP + (deoxyribonucleotide)n-3'-hydroxyl + 5'-phospho-(deoxyribonucleotide)m = (deoxyribonucleotide)n+m + AMP + diphosphate.</text>
        <dbReference type="EC" id="6.5.1.1"/>
    </reaction>
</comment>
<comment type="cofactor">
    <cofactor evidence="1">
        <name>Mn(2+)</name>
        <dbReference type="ChEBI" id="CHEBI:29035"/>
    </cofactor>
    <text evidence="1">Binds 4 Mn(2+); 2 Mn(2+) for polymerase/primase activity, 1 each for 3-phosphoesterase and ligase.</text>
</comment>
<comment type="subunit">
    <text evidence="1">Interacts with Ku.</text>
</comment>
<comment type="miscellaneous">
    <text>LigD has variable architecture; domain order can be permutated, domains can be independently encoded, while some bacteria lack the 3'-phosphoesterase domain entirely.</text>
</comment>
<comment type="similarity">
    <text evidence="3">In the N-terminal section; belongs to the LigD polymerase family.</text>
</comment>
<comment type="similarity">
    <text evidence="3">In the central section; belongs to the LigD 3'-phosphoesterase family.</text>
</comment>
<comment type="similarity">
    <text evidence="3">In the C-terminal section; belongs to the ATP-dependent DNA ligase family.</text>
</comment>
<gene>
    <name type="primary">ligD</name>
    <name type="ordered locus">BQ2027_MB0963</name>
</gene>
<sequence length="759" mass="83625">MGSASEQRVTLTNADKVLYPATGTTKSDIFDYYAGVAEVMLGHIAGRPATRKRWPNGVDQPAFFEKQLALSAPPWLSRATVAHRSGTTTYPIIDSATGLAWIAQQAALEVHVPQWRFVAEPGSGELNPGPATRLVFDLDPGEGVMMAQLAEVARAVRDLLADIGLVTFPVTSGSKGLHLYTPLDEPVSSRGATVLAKRVAQRLEQAMPALVTSTMTKSLRAGKVFVDWSQNSGSKTTIAPYSLRGRTHPTVAAPRTWAELDDPALRQLSYDEVLTRIARDGDLLERLDADAPVADRLTRYRRMRDASKTPEPIPTAKPVTGDGNTFVIQEHHARRPHYDFRLERDGVLVSWAVPKNLPDNTSVNHLAIHTEDHPLEYATFEGAIPSGEYGAGKVIIWDSGTYDTEKFHDDPHTGEVIVNLHGGRISGRYALIRTNGDRWLAHRLKNQKDQKVFEFDNLAPMLATHGTVAGLKASQWAFEGKWDGYRLLVEADHGAVRLRSRSGRDVTAEYPQLRALAEDLADHHVVLDGEAVVLDSSGVPSFSQMQNRGRDTRVEFWAFDLLYLDGRALLGTRYQDRRKLLETLANATSLTVPELLPGDGAQAFACSRKHGWEGVIAKRRDSRYQPGRRCASWVKDKHWNTQEVVIGGWRAGEGGRSSGVGSLLMGIPGPGGLQFAGRVGTGLSERELANLKEMLAPLHTDESPFDVPLPARDAKGITYVKPALVAEVRYSEWTPEGRLRQSSWRGLRPDKKPSEVVRE</sequence>
<accession>P59971</accession>
<accession>A0A1R3XWV9</accession>
<accession>X2BG90</accession>
<name>LIGD_MYCBO</name>
<proteinExistence type="inferred from homology"/>
<dbReference type="EC" id="6.5.1.1"/>
<dbReference type="EMBL" id="LT708304">
    <property type="protein sequence ID" value="SIT99561.1"/>
    <property type="molecule type" value="Genomic_DNA"/>
</dbReference>
<dbReference type="RefSeq" id="NP_854620.1">
    <property type="nucleotide sequence ID" value="NC_002945.3"/>
</dbReference>
<dbReference type="RefSeq" id="WP_003898655.1">
    <property type="nucleotide sequence ID" value="NC_002945.4"/>
</dbReference>
<dbReference type="SMR" id="P59971"/>
<dbReference type="KEGG" id="mbo:BQ2027_MB0963"/>
<dbReference type="PATRIC" id="fig|233413.5.peg.1048"/>
<dbReference type="Proteomes" id="UP000001419">
    <property type="component" value="Chromosome"/>
</dbReference>
<dbReference type="GO" id="GO:0005524">
    <property type="term" value="F:ATP binding"/>
    <property type="evidence" value="ECO:0007669"/>
    <property type="project" value="UniProtKB-KW"/>
</dbReference>
<dbReference type="GO" id="GO:0003677">
    <property type="term" value="F:DNA binding"/>
    <property type="evidence" value="ECO:0007669"/>
    <property type="project" value="UniProtKB-KW"/>
</dbReference>
<dbReference type="GO" id="GO:0003910">
    <property type="term" value="F:DNA ligase (ATP) activity"/>
    <property type="evidence" value="ECO:0007669"/>
    <property type="project" value="UniProtKB-EC"/>
</dbReference>
<dbReference type="GO" id="GO:0003887">
    <property type="term" value="F:DNA-directed DNA polymerase activity"/>
    <property type="evidence" value="ECO:0007669"/>
    <property type="project" value="UniProtKB-KW"/>
</dbReference>
<dbReference type="GO" id="GO:0004527">
    <property type="term" value="F:exonuclease activity"/>
    <property type="evidence" value="ECO:0007669"/>
    <property type="project" value="UniProtKB-KW"/>
</dbReference>
<dbReference type="GO" id="GO:0046872">
    <property type="term" value="F:metal ion binding"/>
    <property type="evidence" value="ECO:0007669"/>
    <property type="project" value="UniProtKB-KW"/>
</dbReference>
<dbReference type="GO" id="GO:0006310">
    <property type="term" value="P:DNA recombination"/>
    <property type="evidence" value="ECO:0007669"/>
    <property type="project" value="UniProtKB-KW"/>
</dbReference>
<dbReference type="GO" id="GO:0006281">
    <property type="term" value="P:DNA repair"/>
    <property type="evidence" value="ECO:0007669"/>
    <property type="project" value="UniProtKB-KW"/>
</dbReference>
<dbReference type="CDD" id="cd07906">
    <property type="entry name" value="Adenylation_DNA_ligase_LigD_LigC"/>
    <property type="match status" value="1"/>
</dbReference>
<dbReference type="CDD" id="cd04863">
    <property type="entry name" value="MtLigD_Pol_like"/>
    <property type="match status" value="1"/>
</dbReference>
<dbReference type="CDD" id="cd07971">
    <property type="entry name" value="OBF_DNA_ligase_LigD"/>
    <property type="match status" value="1"/>
</dbReference>
<dbReference type="FunFam" id="3.30.470.30:FF:000031">
    <property type="entry name" value="Multifunctional non-homologous end joining protein LigD"/>
    <property type="match status" value="1"/>
</dbReference>
<dbReference type="FunFam" id="3.90.920.10:FF:000007">
    <property type="entry name" value="Possible ATP dependant DNA ligase"/>
    <property type="match status" value="1"/>
</dbReference>
<dbReference type="FunFam" id="2.40.50.140:FF:000292">
    <property type="entry name" value="Probable ATP-dependent DNA ligase"/>
    <property type="match status" value="1"/>
</dbReference>
<dbReference type="Gene3D" id="3.30.1490.70">
    <property type="match status" value="1"/>
</dbReference>
<dbReference type="Gene3D" id="3.30.470.30">
    <property type="entry name" value="DNA ligase/mRNA capping enzyme"/>
    <property type="match status" value="1"/>
</dbReference>
<dbReference type="Gene3D" id="3.90.920.10">
    <property type="entry name" value="DNA primase, PRIM domain"/>
    <property type="match status" value="1"/>
</dbReference>
<dbReference type="Gene3D" id="2.40.50.140">
    <property type="entry name" value="Nucleic acid-binding proteins"/>
    <property type="match status" value="1"/>
</dbReference>
<dbReference type="InterPro" id="IPR012309">
    <property type="entry name" value="DNA_ligase_ATP-dep_C"/>
</dbReference>
<dbReference type="InterPro" id="IPR012310">
    <property type="entry name" value="DNA_ligase_ATP-dep_cent"/>
</dbReference>
<dbReference type="InterPro" id="IPR014146">
    <property type="entry name" value="LigD_ligase_dom"/>
</dbReference>
<dbReference type="InterPro" id="IPR014144">
    <property type="entry name" value="LigD_PE_domain"/>
</dbReference>
<dbReference type="InterPro" id="IPR014145">
    <property type="entry name" value="LigD_pol_dom"/>
</dbReference>
<dbReference type="InterPro" id="IPR033649">
    <property type="entry name" value="MtLigD_Pol-like"/>
</dbReference>
<dbReference type="InterPro" id="IPR012340">
    <property type="entry name" value="NA-bd_OB-fold"/>
</dbReference>
<dbReference type="InterPro" id="IPR052171">
    <property type="entry name" value="NHEJ_LigD"/>
</dbReference>
<dbReference type="NCBIfam" id="TIGR02777">
    <property type="entry name" value="LigD_PE_dom"/>
    <property type="match status" value="1"/>
</dbReference>
<dbReference type="NCBIfam" id="TIGR02778">
    <property type="entry name" value="ligD_pol"/>
    <property type="match status" value="1"/>
</dbReference>
<dbReference type="NCBIfam" id="TIGR02779">
    <property type="entry name" value="NHEJ_ligase_lig"/>
    <property type="match status" value="1"/>
</dbReference>
<dbReference type="NCBIfam" id="NF007210">
    <property type="entry name" value="PRK09632.1"/>
    <property type="match status" value="1"/>
</dbReference>
<dbReference type="PANTHER" id="PTHR42705">
    <property type="entry name" value="BIFUNCTIONAL NON-HOMOLOGOUS END JOINING PROTEIN LIGD"/>
    <property type="match status" value="1"/>
</dbReference>
<dbReference type="PANTHER" id="PTHR42705:SF2">
    <property type="entry name" value="BIFUNCTIONAL NON-HOMOLOGOUS END JOINING PROTEIN LIGD"/>
    <property type="match status" value="1"/>
</dbReference>
<dbReference type="Pfam" id="PF04679">
    <property type="entry name" value="DNA_ligase_A_C"/>
    <property type="match status" value="1"/>
</dbReference>
<dbReference type="Pfam" id="PF01068">
    <property type="entry name" value="DNA_ligase_A_M"/>
    <property type="match status" value="1"/>
</dbReference>
<dbReference type="Pfam" id="PF13298">
    <property type="entry name" value="LigD_N"/>
    <property type="match status" value="1"/>
</dbReference>
<dbReference type="Pfam" id="PF21686">
    <property type="entry name" value="LigD_Prim-Pol"/>
    <property type="match status" value="1"/>
</dbReference>
<dbReference type="SUPFAM" id="SSF56091">
    <property type="entry name" value="DNA ligase/mRNA capping enzyme, catalytic domain"/>
    <property type="match status" value="1"/>
</dbReference>
<dbReference type="SUPFAM" id="SSF50249">
    <property type="entry name" value="Nucleic acid-binding proteins"/>
    <property type="match status" value="1"/>
</dbReference>
<dbReference type="PROSITE" id="PS50160">
    <property type="entry name" value="DNA_LIGASE_A3"/>
    <property type="match status" value="1"/>
</dbReference>
<protein>
    <recommendedName>
        <fullName>Multifunctional non-homologous end joining protein LigD</fullName>
    </recommendedName>
    <alternativeName>
        <fullName>NHEJ DNA polymerase</fullName>
    </alternativeName>
    <domain>
        <recommendedName>
            <fullName>DNA repair polymerase</fullName>
            <shortName>Pol</shortName>
        </recommendedName>
        <alternativeName>
            <fullName>Polymerase/primase</fullName>
        </alternativeName>
    </domain>
    <domain>
        <recommendedName>
            <fullName>3'-phosphoesterase</fullName>
            <shortName>3'-ribonuclease/3'-phosphatase</shortName>
            <shortName>PE</shortName>
        </recommendedName>
    </domain>
    <domain>
        <recommendedName>
            <fullName>DNA ligase</fullName>
            <shortName>Lig</shortName>
            <ecNumber>6.5.1.1</ecNumber>
        </recommendedName>
        <alternativeName>
            <fullName>Polydeoxyribonucleotide synthase [ATP]</fullName>
        </alternativeName>
    </domain>
</protein>
<reference key="1">
    <citation type="journal article" date="2003" name="Proc. Natl. Acad. Sci. U.S.A.">
        <title>The complete genome sequence of Mycobacterium bovis.</title>
        <authorList>
            <person name="Garnier T."/>
            <person name="Eiglmeier K."/>
            <person name="Camus J.-C."/>
            <person name="Medina N."/>
            <person name="Mansoor H."/>
            <person name="Pryor M."/>
            <person name="Duthoy S."/>
            <person name="Grondin S."/>
            <person name="Lacroix C."/>
            <person name="Monsempe C."/>
            <person name="Simon S."/>
            <person name="Harris B."/>
            <person name="Atkin R."/>
            <person name="Doggett J."/>
            <person name="Mayes R."/>
            <person name="Keating L."/>
            <person name="Wheeler P.R."/>
            <person name="Parkhill J."/>
            <person name="Barrell B.G."/>
            <person name="Cole S.T."/>
            <person name="Gordon S.V."/>
            <person name="Hewinson R.G."/>
        </authorList>
    </citation>
    <scope>NUCLEOTIDE SEQUENCE [LARGE SCALE GENOMIC DNA]</scope>
    <source>
        <strain>ATCC BAA-935 / AF2122/97</strain>
    </source>
</reference>
<reference key="2">
    <citation type="journal article" date="2017" name="Genome Announc.">
        <title>Updated reference genome sequence and annotation of Mycobacterium bovis AF2122/97.</title>
        <authorList>
            <person name="Malone K.M."/>
            <person name="Farrell D."/>
            <person name="Stuber T.P."/>
            <person name="Schubert O.T."/>
            <person name="Aebersold R."/>
            <person name="Robbe-Austerman S."/>
            <person name="Gordon S.V."/>
        </authorList>
    </citation>
    <scope>NUCLEOTIDE SEQUENCE [LARGE SCALE GENOMIC DNA]</scope>
    <scope>GENOME REANNOTATION</scope>
    <source>
        <strain>ATCC BAA-935 / AF2122/97</strain>
    </source>
</reference>
<organism>
    <name type="scientific">Mycobacterium bovis (strain ATCC BAA-935 / AF2122/97)</name>
    <dbReference type="NCBI Taxonomy" id="233413"/>
    <lineage>
        <taxon>Bacteria</taxon>
        <taxon>Bacillati</taxon>
        <taxon>Actinomycetota</taxon>
        <taxon>Actinomycetes</taxon>
        <taxon>Mycobacteriales</taxon>
        <taxon>Mycobacteriaceae</taxon>
        <taxon>Mycobacterium</taxon>
        <taxon>Mycobacterium tuberculosis complex</taxon>
    </lineage>
</organism>
<keyword id="KW-0067">ATP-binding</keyword>
<keyword id="KW-0227">DNA damage</keyword>
<keyword id="KW-0233">DNA recombination</keyword>
<keyword id="KW-0234">DNA repair</keyword>
<keyword id="KW-0238">DNA-binding</keyword>
<keyword id="KW-0239">DNA-directed DNA polymerase</keyword>
<keyword id="KW-0269">Exonuclease</keyword>
<keyword id="KW-0378">Hydrolase</keyword>
<keyword id="KW-0436">Ligase</keyword>
<keyword id="KW-0464">Manganese</keyword>
<keyword id="KW-0479">Metal-binding</keyword>
<keyword id="KW-0511">Multifunctional enzyme</keyword>
<keyword id="KW-0540">Nuclease</keyword>
<keyword id="KW-0547">Nucleotide-binding</keyword>
<keyword id="KW-0548">Nucleotidyltransferase</keyword>
<keyword id="KW-1185">Reference proteome</keyword>
<keyword id="KW-0808">Transferase</keyword>